<organism>
    <name type="scientific">Salmonella typhi</name>
    <dbReference type="NCBI Taxonomy" id="90370"/>
    <lineage>
        <taxon>Bacteria</taxon>
        <taxon>Pseudomonadati</taxon>
        <taxon>Pseudomonadota</taxon>
        <taxon>Gammaproteobacteria</taxon>
        <taxon>Enterobacterales</taxon>
        <taxon>Enterobacteriaceae</taxon>
        <taxon>Salmonella</taxon>
    </lineage>
</organism>
<keyword id="KW-0963">Cytoplasm</keyword>
<keyword id="KW-0251">Elongation factor</keyword>
<keyword id="KW-0342">GTP-binding</keyword>
<keyword id="KW-0547">Nucleotide-binding</keyword>
<keyword id="KW-0648">Protein biosynthesis</keyword>
<reference key="1">
    <citation type="journal article" date="2001" name="Nature">
        <title>Complete genome sequence of a multiple drug resistant Salmonella enterica serovar Typhi CT18.</title>
        <authorList>
            <person name="Parkhill J."/>
            <person name="Dougan G."/>
            <person name="James K.D."/>
            <person name="Thomson N.R."/>
            <person name="Pickard D."/>
            <person name="Wain J."/>
            <person name="Churcher C.M."/>
            <person name="Mungall K.L."/>
            <person name="Bentley S.D."/>
            <person name="Holden M.T.G."/>
            <person name="Sebaihia M."/>
            <person name="Baker S."/>
            <person name="Basham D."/>
            <person name="Brooks K."/>
            <person name="Chillingworth T."/>
            <person name="Connerton P."/>
            <person name="Cronin A."/>
            <person name="Davis P."/>
            <person name="Davies R.M."/>
            <person name="Dowd L."/>
            <person name="White N."/>
            <person name="Farrar J."/>
            <person name="Feltwell T."/>
            <person name="Hamlin N."/>
            <person name="Haque A."/>
            <person name="Hien T.T."/>
            <person name="Holroyd S."/>
            <person name="Jagels K."/>
            <person name="Krogh A."/>
            <person name="Larsen T.S."/>
            <person name="Leather S."/>
            <person name="Moule S."/>
            <person name="O'Gaora P."/>
            <person name="Parry C."/>
            <person name="Quail M.A."/>
            <person name="Rutherford K.M."/>
            <person name="Simmonds M."/>
            <person name="Skelton J."/>
            <person name="Stevens K."/>
            <person name="Whitehead S."/>
            <person name="Barrell B.G."/>
        </authorList>
    </citation>
    <scope>NUCLEOTIDE SEQUENCE [LARGE SCALE GENOMIC DNA]</scope>
    <source>
        <strain>CT18</strain>
    </source>
</reference>
<reference key="2">
    <citation type="journal article" date="2003" name="J. Bacteriol.">
        <title>Comparative genomics of Salmonella enterica serovar Typhi strains Ty2 and CT18.</title>
        <authorList>
            <person name="Deng W."/>
            <person name="Liou S.-R."/>
            <person name="Plunkett G. III"/>
            <person name="Mayhew G.F."/>
            <person name="Rose D.J."/>
            <person name="Burland V."/>
            <person name="Kodoyianni V."/>
            <person name="Schwartz D.C."/>
            <person name="Blattner F.R."/>
        </authorList>
    </citation>
    <scope>NUCLEOTIDE SEQUENCE [LARGE SCALE GENOMIC DNA]</scope>
    <source>
        <strain>ATCC 700931 / Ty2</strain>
    </source>
</reference>
<sequence length="704" mass="77599">MARTTPIARYRNIGISAHIDAGKTTTTERILFYTGVNHKIGEVHDGAATMDWMEQEQERGITITSAATTAFWSGMAKQYEPHRINIIDTPGHVDFTIEVERSMRVLDGAVMVYCAVGGVQPQSETVWRQANKYKVPRIAFVNKMDRMGANFLKVVGQIKTRLGANPVPLQLAIGAEEGFTGVVDLVKMKAINWNDADQGVTFEYEDIPADMQDLANEWHQNLIESAAEASEELMEKYLGGEELTEEEIKQALRQRVLNNEIILVTCGSAFKNKGVQAMLDAVIDYLPSPVDVPAINGILDDGKDTPAERHASDDEPFSALAFKIATDPFVGNLTFFRVYSGVVNSGDTVLNSVKTARERFGRIVQMHANKREEIKEVRAGDIAAAIGLKDVTTGDTLCDPENPIILERMEFPEPVISIAVEPKTKADQEKMGLALGRLAKEDPSFRVWTDEESNQTIIAGMGELHLDIIVDRMKREFNVEANVGKPQVAYREAIRAKVTDIEGKHAKQSGGRGQYGHVVIDMYPLEPGSNPKGYEFINDIKGGVIPGEYIPAVDKGIQEQLKSGPLAGYPVVDLGVRLHFGSYHDVDSSELAFKLAASIAFKEGFKKAKPVLLEPIMKVEVETPEENTGDVIGDLSRRRGMLKGQESEVTGVKIHAEVPLSEMFGYATQLRSLTKGRASYTMEFLKYDDAPNNVAQAVIEARGK</sequence>
<accession>P0A1H4</accession>
<accession>P26229</accession>
<gene>
    <name type="primary">fusA</name>
    <name type="ordered locus">STY4352</name>
    <name type="ordered locus">t4059</name>
</gene>
<proteinExistence type="inferred from homology"/>
<dbReference type="EMBL" id="AL513382">
    <property type="protein sequence ID" value="CAD08167.1"/>
    <property type="molecule type" value="Genomic_DNA"/>
</dbReference>
<dbReference type="EMBL" id="AE014613">
    <property type="protein sequence ID" value="AAO71526.1"/>
    <property type="molecule type" value="Genomic_DNA"/>
</dbReference>
<dbReference type="RefSeq" id="NP_458454.1">
    <property type="nucleotide sequence ID" value="NC_003198.1"/>
</dbReference>
<dbReference type="RefSeq" id="WP_000124693.1">
    <property type="nucleotide sequence ID" value="NZ_WSUR01000001.1"/>
</dbReference>
<dbReference type="SMR" id="P0A1H4"/>
<dbReference type="STRING" id="220341.gene:17588180"/>
<dbReference type="KEGG" id="stt:t4059"/>
<dbReference type="KEGG" id="sty:STY4352"/>
<dbReference type="PATRIC" id="fig|220341.7.peg.4447"/>
<dbReference type="eggNOG" id="COG0480">
    <property type="taxonomic scope" value="Bacteria"/>
</dbReference>
<dbReference type="HOGENOM" id="CLU_002794_4_1_6"/>
<dbReference type="OMA" id="GQFAKVQ"/>
<dbReference type="OrthoDB" id="9804431at2"/>
<dbReference type="Proteomes" id="UP000000541">
    <property type="component" value="Chromosome"/>
</dbReference>
<dbReference type="Proteomes" id="UP000002670">
    <property type="component" value="Chromosome"/>
</dbReference>
<dbReference type="GO" id="GO:0005737">
    <property type="term" value="C:cytoplasm"/>
    <property type="evidence" value="ECO:0007669"/>
    <property type="project" value="UniProtKB-SubCell"/>
</dbReference>
<dbReference type="GO" id="GO:0005525">
    <property type="term" value="F:GTP binding"/>
    <property type="evidence" value="ECO:0007669"/>
    <property type="project" value="UniProtKB-UniRule"/>
</dbReference>
<dbReference type="GO" id="GO:0003924">
    <property type="term" value="F:GTPase activity"/>
    <property type="evidence" value="ECO:0007669"/>
    <property type="project" value="InterPro"/>
</dbReference>
<dbReference type="GO" id="GO:0097216">
    <property type="term" value="F:guanosine tetraphosphate binding"/>
    <property type="evidence" value="ECO:0007669"/>
    <property type="project" value="UniProtKB-ARBA"/>
</dbReference>
<dbReference type="GO" id="GO:0003746">
    <property type="term" value="F:translation elongation factor activity"/>
    <property type="evidence" value="ECO:0007669"/>
    <property type="project" value="UniProtKB-UniRule"/>
</dbReference>
<dbReference type="GO" id="GO:0032790">
    <property type="term" value="P:ribosome disassembly"/>
    <property type="evidence" value="ECO:0007669"/>
    <property type="project" value="TreeGrafter"/>
</dbReference>
<dbReference type="CDD" id="cd01886">
    <property type="entry name" value="EF-G"/>
    <property type="match status" value="1"/>
</dbReference>
<dbReference type="CDD" id="cd16262">
    <property type="entry name" value="EFG_III"/>
    <property type="match status" value="1"/>
</dbReference>
<dbReference type="CDD" id="cd01434">
    <property type="entry name" value="EFG_mtEFG1_IV"/>
    <property type="match status" value="1"/>
</dbReference>
<dbReference type="CDD" id="cd03713">
    <property type="entry name" value="EFG_mtEFG_C"/>
    <property type="match status" value="1"/>
</dbReference>
<dbReference type="CDD" id="cd04088">
    <property type="entry name" value="EFG_mtEFG_II"/>
    <property type="match status" value="1"/>
</dbReference>
<dbReference type="FunFam" id="2.40.30.10:FF:000006">
    <property type="entry name" value="Elongation factor G"/>
    <property type="match status" value="1"/>
</dbReference>
<dbReference type="FunFam" id="3.30.230.10:FF:000003">
    <property type="entry name" value="Elongation factor G"/>
    <property type="match status" value="1"/>
</dbReference>
<dbReference type="FunFam" id="3.30.70.240:FF:000001">
    <property type="entry name" value="Elongation factor G"/>
    <property type="match status" value="1"/>
</dbReference>
<dbReference type="FunFam" id="3.30.70.870:FF:000001">
    <property type="entry name" value="Elongation factor G"/>
    <property type="match status" value="1"/>
</dbReference>
<dbReference type="FunFam" id="3.40.50.300:FF:000029">
    <property type="entry name" value="Elongation factor G"/>
    <property type="match status" value="1"/>
</dbReference>
<dbReference type="Gene3D" id="3.30.230.10">
    <property type="match status" value="1"/>
</dbReference>
<dbReference type="Gene3D" id="3.30.70.240">
    <property type="match status" value="1"/>
</dbReference>
<dbReference type="Gene3D" id="3.30.70.870">
    <property type="entry name" value="Elongation Factor G (Translational Gtpase), domain 3"/>
    <property type="match status" value="1"/>
</dbReference>
<dbReference type="Gene3D" id="3.40.50.300">
    <property type="entry name" value="P-loop containing nucleotide triphosphate hydrolases"/>
    <property type="match status" value="1"/>
</dbReference>
<dbReference type="Gene3D" id="2.40.30.10">
    <property type="entry name" value="Translation factors"/>
    <property type="match status" value="1"/>
</dbReference>
<dbReference type="HAMAP" id="MF_00054_B">
    <property type="entry name" value="EF_G_EF_2_B"/>
    <property type="match status" value="1"/>
</dbReference>
<dbReference type="InterPro" id="IPR041095">
    <property type="entry name" value="EFG_II"/>
</dbReference>
<dbReference type="InterPro" id="IPR009022">
    <property type="entry name" value="EFG_III"/>
</dbReference>
<dbReference type="InterPro" id="IPR035647">
    <property type="entry name" value="EFG_III/V"/>
</dbReference>
<dbReference type="InterPro" id="IPR047872">
    <property type="entry name" value="EFG_IV"/>
</dbReference>
<dbReference type="InterPro" id="IPR035649">
    <property type="entry name" value="EFG_V"/>
</dbReference>
<dbReference type="InterPro" id="IPR000640">
    <property type="entry name" value="EFG_V-like"/>
</dbReference>
<dbReference type="InterPro" id="IPR004161">
    <property type="entry name" value="EFTu-like_2"/>
</dbReference>
<dbReference type="InterPro" id="IPR031157">
    <property type="entry name" value="G_TR_CS"/>
</dbReference>
<dbReference type="InterPro" id="IPR027417">
    <property type="entry name" value="P-loop_NTPase"/>
</dbReference>
<dbReference type="InterPro" id="IPR020568">
    <property type="entry name" value="Ribosomal_Su5_D2-typ_SF"/>
</dbReference>
<dbReference type="InterPro" id="IPR014721">
    <property type="entry name" value="Ribsml_uS5_D2-typ_fold_subgr"/>
</dbReference>
<dbReference type="InterPro" id="IPR005225">
    <property type="entry name" value="Small_GTP-bd"/>
</dbReference>
<dbReference type="InterPro" id="IPR000795">
    <property type="entry name" value="T_Tr_GTP-bd_dom"/>
</dbReference>
<dbReference type="InterPro" id="IPR009000">
    <property type="entry name" value="Transl_B-barrel_sf"/>
</dbReference>
<dbReference type="InterPro" id="IPR004540">
    <property type="entry name" value="Transl_elong_EFG/EF2"/>
</dbReference>
<dbReference type="InterPro" id="IPR005517">
    <property type="entry name" value="Transl_elong_EFG/EF2_IV"/>
</dbReference>
<dbReference type="NCBIfam" id="TIGR00484">
    <property type="entry name" value="EF-G"/>
    <property type="match status" value="1"/>
</dbReference>
<dbReference type="NCBIfam" id="NF009381">
    <property type="entry name" value="PRK12740.1-5"/>
    <property type="match status" value="1"/>
</dbReference>
<dbReference type="NCBIfam" id="TIGR00231">
    <property type="entry name" value="small_GTP"/>
    <property type="match status" value="1"/>
</dbReference>
<dbReference type="PANTHER" id="PTHR43261:SF1">
    <property type="entry name" value="RIBOSOME-RELEASING FACTOR 2, MITOCHONDRIAL"/>
    <property type="match status" value="1"/>
</dbReference>
<dbReference type="PANTHER" id="PTHR43261">
    <property type="entry name" value="TRANSLATION ELONGATION FACTOR G-RELATED"/>
    <property type="match status" value="1"/>
</dbReference>
<dbReference type="Pfam" id="PF00679">
    <property type="entry name" value="EFG_C"/>
    <property type="match status" value="1"/>
</dbReference>
<dbReference type="Pfam" id="PF14492">
    <property type="entry name" value="EFG_III"/>
    <property type="match status" value="1"/>
</dbReference>
<dbReference type="Pfam" id="PF03764">
    <property type="entry name" value="EFG_IV"/>
    <property type="match status" value="1"/>
</dbReference>
<dbReference type="Pfam" id="PF00009">
    <property type="entry name" value="GTP_EFTU"/>
    <property type="match status" value="1"/>
</dbReference>
<dbReference type="Pfam" id="PF03144">
    <property type="entry name" value="GTP_EFTU_D2"/>
    <property type="match status" value="1"/>
</dbReference>
<dbReference type="PRINTS" id="PR00315">
    <property type="entry name" value="ELONGATNFCT"/>
</dbReference>
<dbReference type="SMART" id="SM00838">
    <property type="entry name" value="EFG_C"/>
    <property type="match status" value="1"/>
</dbReference>
<dbReference type="SMART" id="SM00889">
    <property type="entry name" value="EFG_IV"/>
    <property type="match status" value="1"/>
</dbReference>
<dbReference type="SUPFAM" id="SSF54980">
    <property type="entry name" value="EF-G C-terminal domain-like"/>
    <property type="match status" value="2"/>
</dbReference>
<dbReference type="SUPFAM" id="SSF52540">
    <property type="entry name" value="P-loop containing nucleoside triphosphate hydrolases"/>
    <property type="match status" value="1"/>
</dbReference>
<dbReference type="SUPFAM" id="SSF54211">
    <property type="entry name" value="Ribosomal protein S5 domain 2-like"/>
    <property type="match status" value="1"/>
</dbReference>
<dbReference type="SUPFAM" id="SSF50447">
    <property type="entry name" value="Translation proteins"/>
    <property type="match status" value="1"/>
</dbReference>
<dbReference type="PROSITE" id="PS00301">
    <property type="entry name" value="G_TR_1"/>
    <property type="match status" value="1"/>
</dbReference>
<dbReference type="PROSITE" id="PS51722">
    <property type="entry name" value="G_TR_2"/>
    <property type="match status" value="1"/>
</dbReference>
<protein>
    <recommendedName>
        <fullName>Elongation factor G</fullName>
        <shortName>EF-G</shortName>
    </recommendedName>
</protein>
<comment type="function">
    <text evidence="1">Catalyzes the GTP-dependent ribosomal translocation step during translation elongation. During this step, the ribosome changes from the pre-translocational (PRE) to the post-translocational (POST) state as the newly formed A-site-bound peptidyl-tRNA and P-site-bound deacylated tRNA move to the P and E sites, respectively. Catalyzes the coordinated movement of the two tRNA molecules, the mRNA and conformational changes in the ribosome (By similarity).</text>
</comment>
<comment type="subcellular location">
    <subcellularLocation>
        <location evidence="1">Cytoplasm</location>
    </subcellularLocation>
</comment>
<comment type="similarity">
    <text evidence="2">Belongs to the TRAFAC class translation factor GTPase superfamily. Classic translation factor GTPase family. EF-G/EF-2 subfamily.</text>
</comment>
<feature type="initiator methionine" description="Removed" evidence="1">
    <location>
        <position position="1"/>
    </location>
</feature>
<feature type="chain" id="PRO_0000091207" description="Elongation factor G">
    <location>
        <begin position="2"/>
        <end position="704"/>
    </location>
</feature>
<feature type="domain" description="tr-type G">
    <location>
        <begin position="8"/>
        <end position="290"/>
    </location>
</feature>
<feature type="binding site" evidence="1">
    <location>
        <begin position="17"/>
        <end position="24"/>
    </location>
    <ligand>
        <name>GTP</name>
        <dbReference type="ChEBI" id="CHEBI:37565"/>
    </ligand>
</feature>
<feature type="binding site" evidence="1">
    <location>
        <begin position="88"/>
        <end position="92"/>
    </location>
    <ligand>
        <name>GTP</name>
        <dbReference type="ChEBI" id="CHEBI:37565"/>
    </ligand>
</feature>
<feature type="binding site" evidence="1">
    <location>
        <begin position="142"/>
        <end position="145"/>
    </location>
    <ligand>
        <name>GTP</name>
        <dbReference type="ChEBI" id="CHEBI:37565"/>
    </ligand>
</feature>
<name>EFG_SALTI</name>
<evidence type="ECO:0000250" key="1"/>
<evidence type="ECO:0000305" key="2"/>